<name>NUOD_LEPBL</name>
<keyword id="KW-0997">Cell inner membrane</keyword>
<keyword id="KW-1003">Cell membrane</keyword>
<keyword id="KW-0472">Membrane</keyword>
<keyword id="KW-0520">NAD</keyword>
<keyword id="KW-0874">Quinone</keyword>
<keyword id="KW-1278">Translocase</keyword>
<keyword id="KW-0813">Transport</keyword>
<keyword id="KW-0830">Ubiquinone</keyword>
<evidence type="ECO:0000255" key="1">
    <source>
        <dbReference type="HAMAP-Rule" id="MF_01358"/>
    </source>
</evidence>
<feature type="chain" id="PRO_0000357837" description="NADH-quinone oxidoreductase subunit D">
    <location>
        <begin position="1"/>
        <end position="405"/>
    </location>
</feature>
<dbReference type="EC" id="7.1.1.-" evidence="1"/>
<dbReference type="EMBL" id="CP000348">
    <property type="protein sequence ID" value="ABJ79938.1"/>
    <property type="molecule type" value="Genomic_DNA"/>
</dbReference>
<dbReference type="RefSeq" id="WP_011670899.1">
    <property type="nucleotide sequence ID" value="NC_008508.1"/>
</dbReference>
<dbReference type="SMR" id="Q04YA7"/>
<dbReference type="KEGG" id="lbl:LBL_2575"/>
<dbReference type="PATRIC" id="fig|355276.3.peg.3312"/>
<dbReference type="HOGENOM" id="CLU_015134_1_2_12"/>
<dbReference type="GO" id="GO:0005886">
    <property type="term" value="C:plasma membrane"/>
    <property type="evidence" value="ECO:0007669"/>
    <property type="project" value="UniProtKB-SubCell"/>
</dbReference>
<dbReference type="GO" id="GO:0051287">
    <property type="term" value="F:NAD binding"/>
    <property type="evidence" value="ECO:0007669"/>
    <property type="project" value="InterPro"/>
</dbReference>
<dbReference type="GO" id="GO:0050136">
    <property type="term" value="F:NADH:ubiquinone reductase (non-electrogenic) activity"/>
    <property type="evidence" value="ECO:0007669"/>
    <property type="project" value="UniProtKB-UniRule"/>
</dbReference>
<dbReference type="GO" id="GO:0048038">
    <property type="term" value="F:quinone binding"/>
    <property type="evidence" value="ECO:0007669"/>
    <property type="project" value="UniProtKB-KW"/>
</dbReference>
<dbReference type="Gene3D" id="1.10.645.10">
    <property type="entry name" value="Cytochrome-c3 Hydrogenase, chain B"/>
    <property type="match status" value="1"/>
</dbReference>
<dbReference type="HAMAP" id="MF_01358">
    <property type="entry name" value="NDH1_NuoD"/>
    <property type="match status" value="1"/>
</dbReference>
<dbReference type="InterPro" id="IPR001135">
    <property type="entry name" value="NADH_Q_OxRdtase_suD"/>
</dbReference>
<dbReference type="InterPro" id="IPR022885">
    <property type="entry name" value="NDH1_su_D/H"/>
</dbReference>
<dbReference type="InterPro" id="IPR029014">
    <property type="entry name" value="NiFe-Hase_large"/>
</dbReference>
<dbReference type="NCBIfam" id="NF004739">
    <property type="entry name" value="PRK06075.1"/>
    <property type="match status" value="1"/>
</dbReference>
<dbReference type="PANTHER" id="PTHR11993:SF10">
    <property type="entry name" value="NADH DEHYDROGENASE [UBIQUINONE] IRON-SULFUR PROTEIN 2, MITOCHONDRIAL"/>
    <property type="match status" value="1"/>
</dbReference>
<dbReference type="PANTHER" id="PTHR11993">
    <property type="entry name" value="NADH-UBIQUINONE OXIDOREDUCTASE 49 KDA SUBUNIT"/>
    <property type="match status" value="1"/>
</dbReference>
<dbReference type="Pfam" id="PF00346">
    <property type="entry name" value="Complex1_49kDa"/>
    <property type="match status" value="1"/>
</dbReference>
<dbReference type="SUPFAM" id="SSF56762">
    <property type="entry name" value="HydB/Nqo4-like"/>
    <property type="match status" value="1"/>
</dbReference>
<gene>
    <name evidence="1" type="primary">nuoD</name>
    <name type="ordered locus">LBL_2575</name>
</gene>
<reference key="1">
    <citation type="journal article" date="2006" name="Proc. Natl. Acad. Sci. U.S.A.">
        <title>Genome reduction in Leptospira borgpetersenii reflects limited transmission potential.</title>
        <authorList>
            <person name="Bulach D.M."/>
            <person name="Zuerner R.L."/>
            <person name="Wilson P."/>
            <person name="Seemann T."/>
            <person name="McGrath A."/>
            <person name="Cullen P.A."/>
            <person name="Davis J."/>
            <person name="Johnson M."/>
            <person name="Kuczek E."/>
            <person name="Alt D.P."/>
            <person name="Peterson-Burch B."/>
            <person name="Coppel R.L."/>
            <person name="Rood J.I."/>
            <person name="Davies J.K."/>
            <person name="Adler B."/>
        </authorList>
    </citation>
    <scope>NUCLEOTIDE SEQUENCE [LARGE SCALE GENOMIC DNA]</scope>
    <source>
        <strain>L550</strain>
    </source>
</reference>
<organism>
    <name type="scientific">Leptospira borgpetersenii serovar Hardjo-bovis (strain L550)</name>
    <dbReference type="NCBI Taxonomy" id="355276"/>
    <lineage>
        <taxon>Bacteria</taxon>
        <taxon>Pseudomonadati</taxon>
        <taxon>Spirochaetota</taxon>
        <taxon>Spirochaetia</taxon>
        <taxon>Leptospirales</taxon>
        <taxon>Leptospiraceae</taxon>
        <taxon>Leptospira</taxon>
    </lineage>
</organism>
<comment type="function">
    <text evidence="1">NDH-1 shuttles electrons from NADH, via FMN and iron-sulfur (Fe-S) centers, to quinones in the respiratory chain. The immediate electron acceptor for the enzyme in this species is believed to be ubiquinone. Couples the redox reaction to proton translocation (for every two electrons transferred, four hydrogen ions are translocated across the cytoplasmic membrane), and thus conserves the redox energy in a proton gradient.</text>
</comment>
<comment type="catalytic activity">
    <reaction evidence="1">
        <text>a quinone + NADH + 5 H(+)(in) = a quinol + NAD(+) + 4 H(+)(out)</text>
        <dbReference type="Rhea" id="RHEA:57888"/>
        <dbReference type="ChEBI" id="CHEBI:15378"/>
        <dbReference type="ChEBI" id="CHEBI:24646"/>
        <dbReference type="ChEBI" id="CHEBI:57540"/>
        <dbReference type="ChEBI" id="CHEBI:57945"/>
        <dbReference type="ChEBI" id="CHEBI:132124"/>
    </reaction>
</comment>
<comment type="subunit">
    <text evidence="1">NDH-1 is composed of 14 different subunits. Subunits NuoB, C, D, E, F, and G constitute the peripheral sector of the complex.</text>
</comment>
<comment type="subcellular location">
    <subcellularLocation>
        <location evidence="1">Cell inner membrane</location>
        <topology evidence="1">Peripheral membrane protein</topology>
        <orientation evidence="1">Cytoplasmic side</orientation>
    </subcellularLocation>
</comment>
<comment type="similarity">
    <text evidence="1">Belongs to the complex I 49 kDa subunit family.</text>
</comment>
<proteinExistence type="inferred from homology"/>
<sequence length="405" mass="46083">MMYEKTAEHFEQKYKNLPEGHLLVNLGPSHPATHGILQNVIQIDGERIVEAESVIGYVHRCFEKLGERYTYNQFLVCTDRMNYVSTPLNNIGWILAVEKMMQVEVPDRVTYVRMIISELSRIMDHIICLGILGVDLGAFSGMLHLFHHRENIYQIIEKLTGARLTTTFCRIGGLERDIYPEFEKEVKLVCKGLKPAIEEFNSLLLKNKIFLGRTEGIGGISAENAIAYGFSGPNLRAAGVDWDVRKDKPYMLYDKVDFDVPIGEDGSVLHRSLVRMEEMRQSIRIIEQLVDGIPSGAWHADLPHAYLPEKNKVYNNMEELIYHFKIIMHGVKVPPGEHYMATEAANGELGFYIISEGEKSPWRVHVRRPCFWYYQSFAELVRGGLLADSVATMSSLNVIAGELDC</sequence>
<protein>
    <recommendedName>
        <fullName evidence="1">NADH-quinone oxidoreductase subunit D</fullName>
        <ecNumber evidence="1">7.1.1.-</ecNumber>
    </recommendedName>
    <alternativeName>
        <fullName evidence="1">NADH dehydrogenase I subunit D</fullName>
    </alternativeName>
    <alternativeName>
        <fullName evidence="1">NDH-1 subunit D</fullName>
    </alternativeName>
</protein>
<accession>Q04YA7</accession>